<accession>P07647</accession>
<feature type="signal peptide" evidence="5">
    <location>
        <begin position="1"/>
        <end position="18"/>
    </location>
</feature>
<feature type="propeptide" id="PRO_0000028009" description="Activation peptide" evidence="2 3 4">
    <location>
        <begin position="19"/>
        <end position="24"/>
    </location>
</feature>
<feature type="chain" id="PRO_0000028010" description="Submandibular glandular kallikrein-9">
    <location>
        <begin position="25"/>
        <end position="259"/>
    </location>
</feature>
<feature type="chain" id="PRO_0000028011" description="Submandibular glandular kallikrein-9 light chain">
    <location>
        <begin position="25"/>
        <end position="111"/>
    </location>
</feature>
<feature type="chain" id="PRO_0000028012" description="Submandibular glandular kallikrein-9 heavy chain">
    <location>
        <begin position="112"/>
        <end position="259"/>
    </location>
</feature>
<feature type="domain" description="Peptidase S1" evidence="1">
    <location>
        <begin position="25"/>
        <end position="256"/>
    </location>
</feature>
<feature type="active site" description="Charge relay system">
    <location>
        <position position="63"/>
    </location>
</feature>
<feature type="active site" description="Charge relay system">
    <location>
        <position position="118"/>
    </location>
</feature>
<feature type="active site" description="Charge relay system">
    <location>
        <position position="211"/>
    </location>
</feature>
<feature type="glycosylation site" description="N-linked (GlcNAc...) asparagine" evidence="5">
    <location>
        <position position="106"/>
    </location>
</feature>
<feature type="disulfide bond" evidence="1">
    <location>
        <begin position="31"/>
        <end position="171"/>
    </location>
</feature>
<feature type="disulfide bond" evidence="1">
    <location>
        <begin position="48"/>
        <end position="64"/>
    </location>
</feature>
<feature type="disulfide bond" evidence="1">
    <location>
        <begin position="150"/>
        <end position="217"/>
    </location>
</feature>
<feature type="disulfide bond" evidence="1">
    <location>
        <begin position="182"/>
        <end position="196"/>
    </location>
</feature>
<feature type="disulfide bond" evidence="1">
    <location>
        <begin position="207"/>
        <end position="232"/>
    </location>
</feature>
<organism>
    <name type="scientific">Rattus norvegicus</name>
    <name type="common">Rat</name>
    <dbReference type="NCBI Taxonomy" id="10116"/>
    <lineage>
        <taxon>Eukaryota</taxon>
        <taxon>Metazoa</taxon>
        <taxon>Chordata</taxon>
        <taxon>Craniata</taxon>
        <taxon>Vertebrata</taxon>
        <taxon>Euteleostomi</taxon>
        <taxon>Mammalia</taxon>
        <taxon>Eutheria</taxon>
        <taxon>Euarchontoglires</taxon>
        <taxon>Glires</taxon>
        <taxon>Rodentia</taxon>
        <taxon>Myomorpha</taxon>
        <taxon>Muroidea</taxon>
        <taxon>Muridae</taxon>
        <taxon>Murinae</taxon>
        <taxon>Rattus</taxon>
    </lineage>
</organism>
<gene>
    <name type="primary">Klk9</name>
    <name type="synonym">Klk-9</name>
    <name type="synonym">Klks3</name>
</gene>
<sequence>MWFLILFLALSLGQIDAAPPGQSRVVGGYNCETNSQPWQVAVIGTTFCGGVLIDPSWVITAAHCYSKNYRVLLGRNNLVKDEPFAQRRLVSQSFQHPDYIPVFMRNHTRQRAYDHNNDLMLLHLSKPADITGGVKVIDLPTEEPKVGSICLASGWGMTNPSEMKLSHDLQCVNIHLLSNEKCIETYKNIETDVTLCAGEMDGGKDTCTGDSGGPLICDGVLQGLTSGGATPCAKPKTPAIYAKLIKFTSWIKKVMKENP</sequence>
<proteinExistence type="evidence at protein level"/>
<reference key="1">
    <citation type="journal article" date="1985" name="Biochemistry">
        <title>Kallikrein-related mRNAs of the rat submaxillary gland: nucleotide sequences of four distinct types including tonin.</title>
        <authorList>
            <person name="Ashley P.L."/>
            <person name="MacDonald R.J."/>
        </authorList>
    </citation>
    <scope>NUCLEOTIDE SEQUENCE [MRNA]</scope>
</reference>
<reference key="2">
    <citation type="journal article" date="2004" name="Genome Res.">
        <title>The status, quality, and expansion of the NIH full-length cDNA project: the Mammalian Gene Collection (MGC).</title>
        <authorList>
            <consortium name="The MGC Project Team"/>
        </authorList>
    </citation>
    <scope>NUCLEOTIDE SEQUENCE [LARGE SCALE MRNA]</scope>
    <source>
        <tissue>Prostate</tissue>
    </source>
</reference>
<reference key="3">
    <citation type="journal article" date="1991" name="J. Biol. Chem.">
        <title>A novel serine protease with vasoconstrictor activity coded by the kallikrein gene S3.</title>
        <authorList>
            <person name="Yamaguchi T."/>
            <person name="Carretero O.A."/>
            <person name="Scicli A.G."/>
        </authorList>
    </citation>
    <scope>PROTEIN SEQUENCE OF 25-36 AND 112-122</scope>
    <source>
        <tissue>Submandibular gland</tissue>
    </source>
</reference>
<reference key="4">
    <citation type="journal article" date="1992" name="J. Biol. Chem.">
        <title>Protein products of the rat kallikrein gene family. Substrate specificities of kallikrein rK2 (tonin) and kallikrein rK9.</title>
        <authorList>
            <person name="Moreau T."/>
            <person name="Brillard-Bourdet M."/>
            <person name="Bouhnik J."/>
            <person name="Gauthier F."/>
        </authorList>
    </citation>
    <scope>PROTEIN SEQUENCE OF 25-47 AND 112-135</scope>
    <scope>CHARACTERIZATION</scope>
</reference>
<reference key="5">
    <citation type="journal article" date="1992" name="Biochem. J.">
        <title>Characterization of a new kallikrein-like enzyme (KLP-S3) of the rat submandibular gland.</title>
        <authorList>
            <person name="Berg T."/>
            <person name="Schoeyen H."/>
            <person name="Wassdal I."/>
            <person name="Hull R."/>
            <person name="Gerskowitch V.P."/>
            <person name="Toft P."/>
        </authorList>
    </citation>
    <scope>PROTEIN SEQUENCE OF 25-53 AND 112-130</scope>
    <scope>CHARACTERIZATION</scope>
    <source>
        <tissue>Submandibular gland</tissue>
    </source>
</reference>
<dbReference type="EC" id="3.4.21.35"/>
<dbReference type="EMBL" id="M11566">
    <property type="protein sequence ID" value="AAA41467.1"/>
    <property type="molecule type" value="mRNA"/>
</dbReference>
<dbReference type="EMBL" id="BC061771">
    <property type="protein sequence ID" value="AAH61771.1"/>
    <property type="molecule type" value="mRNA"/>
</dbReference>
<dbReference type="PIR" id="D23863">
    <property type="entry name" value="D23863"/>
</dbReference>
<dbReference type="RefSeq" id="NP_786935.1">
    <property type="nucleotide sequence ID" value="NM_175759.2"/>
</dbReference>
<dbReference type="SMR" id="P07647"/>
<dbReference type="FunCoup" id="P07647">
    <property type="interactions" value="51"/>
</dbReference>
<dbReference type="STRING" id="10116.ENSRNOP00000070080"/>
<dbReference type="MEROPS" id="S01.407"/>
<dbReference type="GlyCosmos" id="P07647">
    <property type="glycosylation" value="1 site, No reported glycans"/>
</dbReference>
<dbReference type="GlyGen" id="P07647">
    <property type="glycosylation" value="1 site"/>
</dbReference>
<dbReference type="PhosphoSitePlus" id="P07647"/>
<dbReference type="PaxDb" id="10116-ENSRNOP00000025723"/>
<dbReference type="Ensembl" id="ENSRNOT00000025723.3">
    <property type="protein sequence ID" value="ENSRNOP00000025723.2"/>
    <property type="gene ID" value="ENSRNOG00000067884.1"/>
</dbReference>
<dbReference type="GeneID" id="292868"/>
<dbReference type="KEGG" id="rno:292868"/>
<dbReference type="UCSC" id="RGD:727805">
    <property type="organism name" value="rat"/>
</dbReference>
<dbReference type="AGR" id="RGD:727805"/>
<dbReference type="CTD" id="292868"/>
<dbReference type="RGD" id="727805">
    <property type="gene designation" value="Klks3"/>
</dbReference>
<dbReference type="eggNOG" id="KOG3627">
    <property type="taxonomic scope" value="Eukaryota"/>
</dbReference>
<dbReference type="GeneTree" id="ENSGT01020000230389"/>
<dbReference type="InParanoid" id="P07647"/>
<dbReference type="OrthoDB" id="10059102at2759"/>
<dbReference type="PhylomeDB" id="P07647"/>
<dbReference type="TreeFam" id="TF331065"/>
<dbReference type="BRENDA" id="3.4.21.B40">
    <property type="organism ID" value="5301"/>
</dbReference>
<dbReference type="Reactome" id="R-RNO-1592389">
    <property type="pathway name" value="Activation of Matrix Metalloproteinases"/>
</dbReference>
<dbReference type="Reactome" id="R-RNO-381426">
    <property type="pathway name" value="Regulation of Insulin-like Growth Factor (IGF) transport and uptake by Insulin-like Growth Factor Binding Proteins (IGFBPs)"/>
</dbReference>
<dbReference type="PRO" id="PR:P07647"/>
<dbReference type="Proteomes" id="UP000002494">
    <property type="component" value="Chromosome 1"/>
</dbReference>
<dbReference type="Bgee" id="ENSRNOG00000032857">
    <property type="expression patterns" value="Expressed in pancreas and 19 other cell types or tissues"/>
</dbReference>
<dbReference type="ExpressionAtlas" id="P07647">
    <property type="expression patterns" value="baseline and differential"/>
</dbReference>
<dbReference type="GO" id="GO:0005615">
    <property type="term" value="C:extracellular space"/>
    <property type="evidence" value="ECO:0000318"/>
    <property type="project" value="GO_Central"/>
</dbReference>
<dbReference type="GO" id="GO:0030141">
    <property type="term" value="C:secretory granule"/>
    <property type="evidence" value="ECO:0000318"/>
    <property type="project" value="GO_Central"/>
</dbReference>
<dbReference type="GO" id="GO:0004252">
    <property type="term" value="F:serine-type endopeptidase activity"/>
    <property type="evidence" value="ECO:0000318"/>
    <property type="project" value="GO_Central"/>
</dbReference>
<dbReference type="GO" id="GO:0045907">
    <property type="term" value="P:positive regulation of vasoconstriction"/>
    <property type="evidence" value="ECO:0000314"/>
    <property type="project" value="RGD"/>
</dbReference>
<dbReference type="GO" id="GO:0003073">
    <property type="term" value="P:regulation of systemic arterial blood pressure"/>
    <property type="evidence" value="ECO:0000318"/>
    <property type="project" value="GO_Central"/>
</dbReference>
<dbReference type="GO" id="GO:0031638">
    <property type="term" value="P:zymogen activation"/>
    <property type="evidence" value="ECO:0000318"/>
    <property type="project" value="GO_Central"/>
</dbReference>
<dbReference type="CDD" id="cd00190">
    <property type="entry name" value="Tryp_SPc"/>
    <property type="match status" value="1"/>
</dbReference>
<dbReference type="FunFam" id="2.40.10.10:FF:000032">
    <property type="entry name" value="Kallikrein 1-related peptidase C9"/>
    <property type="match status" value="1"/>
</dbReference>
<dbReference type="FunFam" id="2.40.10.10:FF:000036">
    <property type="entry name" value="Trypsin beta"/>
    <property type="match status" value="1"/>
</dbReference>
<dbReference type="Gene3D" id="2.40.10.10">
    <property type="entry name" value="Trypsin-like serine proteases"/>
    <property type="match status" value="2"/>
</dbReference>
<dbReference type="InterPro" id="IPR009003">
    <property type="entry name" value="Peptidase_S1_PA"/>
</dbReference>
<dbReference type="InterPro" id="IPR043504">
    <property type="entry name" value="Peptidase_S1_PA_chymotrypsin"/>
</dbReference>
<dbReference type="InterPro" id="IPR001314">
    <property type="entry name" value="Peptidase_S1A"/>
</dbReference>
<dbReference type="InterPro" id="IPR001254">
    <property type="entry name" value="Trypsin_dom"/>
</dbReference>
<dbReference type="InterPro" id="IPR018114">
    <property type="entry name" value="TRYPSIN_HIS"/>
</dbReference>
<dbReference type="InterPro" id="IPR033116">
    <property type="entry name" value="TRYPSIN_SER"/>
</dbReference>
<dbReference type="PANTHER" id="PTHR24271:SF47">
    <property type="entry name" value="KALLIKREIN-1"/>
    <property type="match status" value="1"/>
</dbReference>
<dbReference type="PANTHER" id="PTHR24271">
    <property type="entry name" value="KALLIKREIN-RELATED"/>
    <property type="match status" value="1"/>
</dbReference>
<dbReference type="Pfam" id="PF00089">
    <property type="entry name" value="Trypsin"/>
    <property type="match status" value="1"/>
</dbReference>
<dbReference type="PRINTS" id="PR00722">
    <property type="entry name" value="CHYMOTRYPSIN"/>
</dbReference>
<dbReference type="SMART" id="SM00020">
    <property type="entry name" value="Tryp_SPc"/>
    <property type="match status" value="1"/>
</dbReference>
<dbReference type="SUPFAM" id="SSF50494">
    <property type="entry name" value="Trypsin-like serine proteases"/>
    <property type="match status" value="1"/>
</dbReference>
<dbReference type="PROSITE" id="PS50240">
    <property type="entry name" value="TRYPSIN_DOM"/>
    <property type="match status" value="1"/>
</dbReference>
<dbReference type="PROSITE" id="PS00134">
    <property type="entry name" value="TRYPSIN_HIS"/>
    <property type="match status" value="1"/>
</dbReference>
<dbReference type="PROSITE" id="PS00135">
    <property type="entry name" value="TRYPSIN_SER"/>
    <property type="match status" value="1"/>
</dbReference>
<evidence type="ECO:0000255" key="1">
    <source>
        <dbReference type="PROSITE-ProRule" id="PRU00274"/>
    </source>
</evidence>
<evidence type="ECO:0000269" key="2">
    <source>
    </source>
</evidence>
<evidence type="ECO:0000269" key="3">
    <source>
    </source>
</evidence>
<evidence type="ECO:0000269" key="4">
    <source>
    </source>
</evidence>
<evidence type="ECO:0000305" key="5"/>
<protein>
    <recommendedName>
        <fullName>Submandibular glandular kallikrein-9</fullName>
        <shortName>rGK-9</shortName>
        <ecNumber>3.4.21.35</ecNumber>
    </recommendedName>
    <alternativeName>
        <fullName>KLK-S3</fullName>
    </alternativeName>
    <alternativeName>
        <fullName>S3 kallikrein</fullName>
    </alternativeName>
    <alternativeName>
        <fullName>Submandibular enzymatic vasoconstrictor</fullName>
        <shortName>SEV</shortName>
    </alternativeName>
    <alternativeName>
        <fullName>Tissue kallikrein</fullName>
    </alternativeName>
    <component>
        <recommendedName>
            <fullName>Submandibular glandular kallikrein-9 light chain</fullName>
        </recommendedName>
    </component>
    <component>
        <recommendedName>
            <fullName>Submandibular glandular kallikrein-9 heavy chain</fullName>
        </recommendedName>
    </component>
</protein>
<comment type="function">
    <text>Glandular kallikreins cleave Met-Lys and Arg-Ser bonds in kininogen to release Lys-bradykinin. This enzyme has a vasoconstrictor activity. KLK-9 has both a chymotrypsin-like and a trypsin-like properties.</text>
</comment>
<comment type="catalytic activity">
    <reaction>
        <text>Preferential cleavage of Arg-|-Xaa bonds in small molecule substrates. Highly selective action to release kallidin (lysyl-bradykinin) from kininogen involves hydrolysis of Met-|-Xaa or Leu-|-Xaa.</text>
        <dbReference type="EC" id="3.4.21.35"/>
    </reaction>
</comment>
<comment type="subunit">
    <text>Heterodimer of a light chain and heavy chain linked by a disulfide bond.</text>
</comment>
<comment type="similarity">
    <text evidence="1">Belongs to the peptidase S1 family. Kallikrein subfamily.</text>
</comment>
<keyword id="KW-0903">Direct protein sequencing</keyword>
<keyword id="KW-1015">Disulfide bond</keyword>
<keyword id="KW-0325">Glycoprotein</keyword>
<keyword id="KW-0378">Hydrolase</keyword>
<keyword id="KW-0645">Protease</keyword>
<keyword id="KW-1185">Reference proteome</keyword>
<keyword id="KW-0720">Serine protease</keyword>
<keyword id="KW-0732">Signal</keyword>
<keyword id="KW-0865">Zymogen</keyword>
<name>KLK9_RAT</name>